<gene>
    <name evidence="1" type="primary">cutA</name>
    <name type="ordered locus">SPA4140</name>
</gene>
<reference key="1">
    <citation type="journal article" date="2004" name="Nat. Genet.">
        <title>Comparison of genome degradation in Paratyphi A and Typhi, human-restricted serovars of Salmonella enterica that cause typhoid.</title>
        <authorList>
            <person name="McClelland M."/>
            <person name="Sanderson K.E."/>
            <person name="Clifton S.W."/>
            <person name="Latreille P."/>
            <person name="Porwollik S."/>
            <person name="Sabo A."/>
            <person name="Meyer R."/>
            <person name="Bieri T."/>
            <person name="Ozersky P."/>
            <person name="McLellan M."/>
            <person name="Harkins C.R."/>
            <person name="Wang C."/>
            <person name="Nguyen C."/>
            <person name="Berghoff A."/>
            <person name="Elliott G."/>
            <person name="Kohlberg S."/>
            <person name="Strong C."/>
            <person name="Du F."/>
            <person name="Carter J."/>
            <person name="Kremizki C."/>
            <person name="Layman D."/>
            <person name="Leonard S."/>
            <person name="Sun H."/>
            <person name="Fulton L."/>
            <person name="Nash W."/>
            <person name="Miner T."/>
            <person name="Minx P."/>
            <person name="Delehaunty K."/>
            <person name="Fronick C."/>
            <person name="Magrini V."/>
            <person name="Nhan M."/>
            <person name="Warren W."/>
            <person name="Florea L."/>
            <person name="Spieth J."/>
            <person name="Wilson R.K."/>
        </authorList>
    </citation>
    <scope>NUCLEOTIDE SEQUENCE [LARGE SCALE GENOMIC DNA]</scope>
    <source>
        <strain>ATCC 9150 / SARB42</strain>
    </source>
</reference>
<sequence>MLDVKSQDISIPEAVVVLCTAPDEATAQDLAAKVLAEKLAACATLLPGATSLYYWEGKLEQEYEVQMILKTTVSHQQALIDCLKSHHPYQTPELLVLPVTHGDTDYLSWLNASLR</sequence>
<accession>Q5PL69</accession>
<keyword id="KW-0186">Copper</keyword>
<keyword id="KW-0963">Cytoplasm</keyword>
<keyword id="KW-0479">Metal-binding</keyword>
<feature type="chain" id="PRO_0000157122" description="Divalent-cation tolerance protein CutA">
    <location>
        <begin position="1"/>
        <end position="115"/>
    </location>
</feature>
<feature type="binding site" evidence="1">
    <location>
        <position position="19"/>
    </location>
    <ligand>
        <name>Cu cation</name>
        <dbReference type="ChEBI" id="CHEBI:23378"/>
    </ligand>
</feature>
<feature type="binding site" evidence="1">
    <location>
        <position position="86"/>
    </location>
    <ligand>
        <name>Cu cation</name>
        <dbReference type="ChEBI" id="CHEBI:23378"/>
    </ligand>
</feature>
<feature type="binding site" evidence="1">
    <location>
        <position position="87"/>
    </location>
    <ligand>
        <name>Cu cation</name>
        <dbReference type="ChEBI" id="CHEBI:23378"/>
    </ligand>
</feature>
<comment type="function">
    <text evidence="1">Involved in resistance toward heavy metals.</text>
</comment>
<comment type="cofactor">
    <cofactor evidence="1">
        <name>Cu cation</name>
        <dbReference type="ChEBI" id="CHEBI:23378"/>
    </cofactor>
    <text evidence="1">Binds 1 copper ion per subunit.</text>
</comment>
<comment type="subunit">
    <text evidence="1">Homotrimer.</text>
</comment>
<comment type="subcellular location">
    <subcellularLocation>
        <location evidence="1">Cytoplasm</location>
    </subcellularLocation>
</comment>
<comment type="similarity">
    <text evidence="1">Belongs to the CutA family.</text>
</comment>
<evidence type="ECO:0000255" key="1">
    <source>
        <dbReference type="HAMAP-Rule" id="MF_01160"/>
    </source>
</evidence>
<proteinExistence type="inferred from homology"/>
<organism>
    <name type="scientific">Salmonella paratyphi A (strain ATCC 9150 / SARB42)</name>
    <dbReference type="NCBI Taxonomy" id="295319"/>
    <lineage>
        <taxon>Bacteria</taxon>
        <taxon>Pseudomonadati</taxon>
        <taxon>Pseudomonadota</taxon>
        <taxon>Gammaproteobacteria</taxon>
        <taxon>Enterobacterales</taxon>
        <taxon>Enterobacteriaceae</taxon>
        <taxon>Salmonella</taxon>
    </lineage>
</organism>
<name>CUTA_SALPA</name>
<protein>
    <recommendedName>
        <fullName evidence="1">Divalent-cation tolerance protein CutA</fullName>
    </recommendedName>
</protein>
<dbReference type="EMBL" id="CP000026">
    <property type="protein sequence ID" value="AAV79881.1"/>
    <property type="molecule type" value="Genomic_DNA"/>
</dbReference>
<dbReference type="RefSeq" id="WP_000887832.1">
    <property type="nucleotide sequence ID" value="NC_006511.1"/>
</dbReference>
<dbReference type="SMR" id="Q5PL69"/>
<dbReference type="GeneID" id="66758552"/>
<dbReference type="KEGG" id="spt:SPA4140"/>
<dbReference type="HOGENOM" id="CLU_098807_3_0_6"/>
<dbReference type="Proteomes" id="UP000008185">
    <property type="component" value="Chromosome"/>
</dbReference>
<dbReference type="GO" id="GO:0005737">
    <property type="term" value="C:cytoplasm"/>
    <property type="evidence" value="ECO:0007669"/>
    <property type="project" value="UniProtKB-SubCell"/>
</dbReference>
<dbReference type="GO" id="GO:0005507">
    <property type="term" value="F:copper ion binding"/>
    <property type="evidence" value="ECO:0007669"/>
    <property type="project" value="UniProtKB-UniRule"/>
</dbReference>
<dbReference type="GO" id="GO:0010038">
    <property type="term" value="P:response to metal ion"/>
    <property type="evidence" value="ECO:0007669"/>
    <property type="project" value="InterPro"/>
</dbReference>
<dbReference type="FunFam" id="3.30.70.120:FF:000004">
    <property type="entry name" value="Divalent-cation tolerance protein CutA"/>
    <property type="match status" value="1"/>
</dbReference>
<dbReference type="Gene3D" id="3.30.70.120">
    <property type="match status" value="1"/>
</dbReference>
<dbReference type="HAMAP" id="MF_01160">
    <property type="entry name" value="CutA"/>
    <property type="match status" value="1"/>
</dbReference>
<dbReference type="InterPro" id="IPR023700">
    <property type="entry name" value="CutA_Enterobact"/>
</dbReference>
<dbReference type="InterPro" id="IPR004323">
    <property type="entry name" value="Ion_tolerance_CutA"/>
</dbReference>
<dbReference type="InterPro" id="IPR011322">
    <property type="entry name" value="N-reg_PII-like_a/b"/>
</dbReference>
<dbReference type="InterPro" id="IPR015867">
    <property type="entry name" value="N-reg_PII/ATP_PRibTrfase_C"/>
</dbReference>
<dbReference type="NCBIfam" id="NF007930">
    <property type="entry name" value="PRK10645.1"/>
    <property type="match status" value="1"/>
</dbReference>
<dbReference type="PANTHER" id="PTHR23419">
    <property type="entry name" value="DIVALENT CATION TOLERANCE CUTA-RELATED"/>
    <property type="match status" value="1"/>
</dbReference>
<dbReference type="PANTHER" id="PTHR23419:SF8">
    <property type="entry name" value="FI09726P"/>
    <property type="match status" value="1"/>
</dbReference>
<dbReference type="Pfam" id="PF03091">
    <property type="entry name" value="CutA1"/>
    <property type="match status" value="1"/>
</dbReference>
<dbReference type="SUPFAM" id="SSF54913">
    <property type="entry name" value="GlnB-like"/>
    <property type="match status" value="1"/>
</dbReference>